<name>IHFA_ECO7I</name>
<sequence>MALTKAEMSEYLFDKLGLSKRDAKELVELFFEEIRRALENGEQVKLSGFGNFDLRDKNQRPGRNPKTGEDIPITARRVVTFRPGQKLKSRVENASPKDE</sequence>
<reference key="1">
    <citation type="journal article" date="2009" name="PLoS Genet.">
        <title>Organised genome dynamics in the Escherichia coli species results in highly diverse adaptive paths.</title>
        <authorList>
            <person name="Touchon M."/>
            <person name="Hoede C."/>
            <person name="Tenaillon O."/>
            <person name="Barbe V."/>
            <person name="Baeriswyl S."/>
            <person name="Bidet P."/>
            <person name="Bingen E."/>
            <person name="Bonacorsi S."/>
            <person name="Bouchier C."/>
            <person name="Bouvet O."/>
            <person name="Calteau A."/>
            <person name="Chiapello H."/>
            <person name="Clermont O."/>
            <person name="Cruveiller S."/>
            <person name="Danchin A."/>
            <person name="Diard M."/>
            <person name="Dossat C."/>
            <person name="Karoui M.E."/>
            <person name="Frapy E."/>
            <person name="Garry L."/>
            <person name="Ghigo J.M."/>
            <person name="Gilles A.M."/>
            <person name="Johnson J."/>
            <person name="Le Bouguenec C."/>
            <person name="Lescat M."/>
            <person name="Mangenot S."/>
            <person name="Martinez-Jehanne V."/>
            <person name="Matic I."/>
            <person name="Nassif X."/>
            <person name="Oztas S."/>
            <person name="Petit M.A."/>
            <person name="Pichon C."/>
            <person name="Rouy Z."/>
            <person name="Ruf C.S."/>
            <person name="Schneider D."/>
            <person name="Tourret J."/>
            <person name="Vacherie B."/>
            <person name="Vallenet D."/>
            <person name="Medigue C."/>
            <person name="Rocha E.P.C."/>
            <person name="Denamur E."/>
        </authorList>
    </citation>
    <scope>NUCLEOTIDE SEQUENCE [LARGE SCALE GENOMIC DNA]</scope>
    <source>
        <strain>IAI39 / ExPEC</strain>
    </source>
</reference>
<feature type="chain" id="PRO_1000122136" description="Integration host factor subunit alpha">
    <location>
        <begin position="1"/>
        <end position="99"/>
    </location>
</feature>
<feature type="region of interest" description="Disordered" evidence="2">
    <location>
        <begin position="49"/>
        <end position="73"/>
    </location>
</feature>
<dbReference type="EMBL" id="CU928164">
    <property type="protein sequence ID" value="CAR17475.1"/>
    <property type="molecule type" value="Genomic_DNA"/>
</dbReference>
<dbReference type="RefSeq" id="WP_001229265.1">
    <property type="nucleotide sequence ID" value="NC_011750.1"/>
</dbReference>
<dbReference type="RefSeq" id="YP_002407349.1">
    <property type="nucleotide sequence ID" value="NC_011750.1"/>
</dbReference>
<dbReference type="SMR" id="B7NT64"/>
<dbReference type="STRING" id="585057.ECIAI39_1341"/>
<dbReference type="GeneID" id="93775925"/>
<dbReference type="KEGG" id="ect:ECIAI39_1341"/>
<dbReference type="PATRIC" id="fig|585057.6.peg.1403"/>
<dbReference type="HOGENOM" id="CLU_105066_1_3_6"/>
<dbReference type="Proteomes" id="UP000000749">
    <property type="component" value="Chromosome"/>
</dbReference>
<dbReference type="GO" id="GO:0005829">
    <property type="term" value="C:cytosol"/>
    <property type="evidence" value="ECO:0007669"/>
    <property type="project" value="TreeGrafter"/>
</dbReference>
<dbReference type="GO" id="GO:0003677">
    <property type="term" value="F:DNA binding"/>
    <property type="evidence" value="ECO:0007669"/>
    <property type="project" value="UniProtKB-UniRule"/>
</dbReference>
<dbReference type="GO" id="GO:0030527">
    <property type="term" value="F:structural constituent of chromatin"/>
    <property type="evidence" value="ECO:0007669"/>
    <property type="project" value="InterPro"/>
</dbReference>
<dbReference type="GO" id="GO:0006310">
    <property type="term" value="P:DNA recombination"/>
    <property type="evidence" value="ECO:0007669"/>
    <property type="project" value="UniProtKB-UniRule"/>
</dbReference>
<dbReference type="GO" id="GO:0009893">
    <property type="term" value="P:positive regulation of metabolic process"/>
    <property type="evidence" value="ECO:0007669"/>
    <property type="project" value="UniProtKB-ARBA"/>
</dbReference>
<dbReference type="GO" id="GO:0006355">
    <property type="term" value="P:regulation of DNA-templated transcription"/>
    <property type="evidence" value="ECO:0007669"/>
    <property type="project" value="UniProtKB-UniRule"/>
</dbReference>
<dbReference type="GO" id="GO:0006417">
    <property type="term" value="P:regulation of translation"/>
    <property type="evidence" value="ECO:0007669"/>
    <property type="project" value="UniProtKB-UniRule"/>
</dbReference>
<dbReference type="CDD" id="cd13835">
    <property type="entry name" value="IHF_A"/>
    <property type="match status" value="1"/>
</dbReference>
<dbReference type="FunFam" id="4.10.520.10:FF:000002">
    <property type="entry name" value="Integration host factor subunit alpha"/>
    <property type="match status" value="1"/>
</dbReference>
<dbReference type="Gene3D" id="4.10.520.10">
    <property type="entry name" value="IHF-like DNA-binding proteins"/>
    <property type="match status" value="1"/>
</dbReference>
<dbReference type="HAMAP" id="MF_00380">
    <property type="entry name" value="IHF_alpha"/>
    <property type="match status" value="1"/>
</dbReference>
<dbReference type="InterPro" id="IPR000119">
    <property type="entry name" value="Hist_DNA-bd"/>
</dbReference>
<dbReference type="InterPro" id="IPR020816">
    <property type="entry name" value="Histone-like_DNA-bd_CS"/>
</dbReference>
<dbReference type="InterPro" id="IPR010992">
    <property type="entry name" value="IHF-like_DNA-bd_dom_sf"/>
</dbReference>
<dbReference type="InterPro" id="IPR005684">
    <property type="entry name" value="IHF_alpha"/>
</dbReference>
<dbReference type="NCBIfam" id="TIGR00987">
    <property type="entry name" value="himA"/>
    <property type="match status" value="1"/>
</dbReference>
<dbReference type="NCBIfam" id="NF001401">
    <property type="entry name" value="PRK00285.1"/>
    <property type="match status" value="1"/>
</dbReference>
<dbReference type="PANTHER" id="PTHR33175">
    <property type="entry name" value="DNA-BINDING PROTEIN HU"/>
    <property type="match status" value="1"/>
</dbReference>
<dbReference type="PANTHER" id="PTHR33175:SF2">
    <property type="entry name" value="INTEGRATION HOST FACTOR SUBUNIT ALPHA"/>
    <property type="match status" value="1"/>
</dbReference>
<dbReference type="Pfam" id="PF00216">
    <property type="entry name" value="Bac_DNA_binding"/>
    <property type="match status" value="1"/>
</dbReference>
<dbReference type="PRINTS" id="PR01727">
    <property type="entry name" value="DNABINDINGHU"/>
</dbReference>
<dbReference type="SMART" id="SM00411">
    <property type="entry name" value="BHL"/>
    <property type="match status" value="1"/>
</dbReference>
<dbReference type="SUPFAM" id="SSF47729">
    <property type="entry name" value="IHF-like DNA-binding proteins"/>
    <property type="match status" value="1"/>
</dbReference>
<dbReference type="PROSITE" id="PS00045">
    <property type="entry name" value="HISTONE_LIKE"/>
    <property type="match status" value="1"/>
</dbReference>
<accession>B7NT64</accession>
<protein>
    <recommendedName>
        <fullName evidence="1">Integration host factor subunit alpha</fullName>
        <shortName evidence="1">IHF-alpha</shortName>
    </recommendedName>
</protein>
<keyword id="KW-0233">DNA recombination</keyword>
<keyword id="KW-0238">DNA-binding</keyword>
<keyword id="KW-0804">Transcription</keyword>
<keyword id="KW-0805">Transcription regulation</keyword>
<keyword id="KW-0810">Translation regulation</keyword>
<gene>
    <name evidence="1" type="primary">ihfA</name>
    <name evidence="1" type="synonym">himA</name>
    <name type="ordered locus">ECIAI39_1341</name>
</gene>
<evidence type="ECO:0000255" key="1">
    <source>
        <dbReference type="HAMAP-Rule" id="MF_00380"/>
    </source>
</evidence>
<evidence type="ECO:0000256" key="2">
    <source>
        <dbReference type="SAM" id="MobiDB-lite"/>
    </source>
</evidence>
<comment type="function">
    <text evidence="1">This protein is one of the two subunits of integration host factor, a specific DNA-binding protein that functions in genetic recombination as well as in transcriptional and translational control.</text>
</comment>
<comment type="subunit">
    <text evidence="1">Heterodimer of an alpha and a beta chain.</text>
</comment>
<comment type="similarity">
    <text evidence="1">Belongs to the bacterial histone-like protein family.</text>
</comment>
<organism>
    <name type="scientific">Escherichia coli O7:K1 (strain IAI39 / ExPEC)</name>
    <dbReference type="NCBI Taxonomy" id="585057"/>
    <lineage>
        <taxon>Bacteria</taxon>
        <taxon>Pseudomonadati</taxon>
        <taxon>Pseudomonadota</taxon>
        <taxon>Gammaproteobacteria</taxon>
        <taxon>Enterobacterales</taxon>
        <taxon>Enterobacteriaceae</taxon>
        <taxon>Escherichia</taxon>
    </lineage>
</organism>
<proteinExistence type="inferred from homology"/>